<protein>
    <recommendedName>
        <fullName>SUMO-conjugating enzyme SCE1</fullName>
        <ecNumber>2.3.2.-</ecNumber>
    </recommendedName>
    <alternativeName>
        <fullName>Protein EMBRYO DEFECTIVE 1637</fullName>
    </alternativeName>
    <alternativeName>
        <fullName>Protein hus5 homolog</fullName>
    </alternativeName>
    <alternativeName>
        <fullName>SUMO-conjugating enzyme 1</fullName>
        <shortName>AtSCE1</shortName>
    </alternativeName>
</protein>
<comment type="function">
    <text evidence="3 4 5">SUMO-conjugating enzyme that accepts the SUMO proteins from the E1 SUMO-activating heterodimer SAE1/SAE2 and catalyzes its covalent attachment to other proteins with the E3 SUMO ligases SIZ1 and MMS21. Associates with SIZ1 for sumoylation of the transcription factor GTE3.</text>
</comment>
<comment type="pathway">
    <text>Protein modification; protein sumoylation.</text>
</comment>
<comment type="subunit">
    <text evidence="4 5 6 7 8">Interacts with SIZ1 (via PHD domain) and MMS21 (PubMed:18502747, PubMed:19682286). Interacts with TCP14 and TCP15 (PubMed:29250092). Interacts with KIN10 (PubMed:20855607, PubMed:26662259).</text>
</comment>
<comment type="interaction">
    <interactant intactId="EBI-4442034">
        <id>Q42551</id>
    </interactant>
    <interactant intactId="EBI-1788073">
        <id>O80837</id>
        <label>DBP</label>
    </interactant>
    <organismsDiffer>false</organismsDiffer>
    <experiments>3</experiments>
</comment>
<comment type="disruption phenotype">
    <text evidence="3">Embryonic lethal.</text>
</comment>
<comment type="similarity">
    <text evidence="2">Belongs to the ubiquitin-conjugating enzyme family.</text>
</comment>
<organism>
    <name type="scientific">Arabidopsis thaliana</name>
    <name type="common">Mouse-ear cress</name>
    <dbReference type="NCBI Taxonomy" id="3702"/>
    <lineage>
        <taxon>Eukaryota</taxon>
        <taxon>Viridiplantae</taxon>
        <taxon>Streptophyta</taxon>
        <taxon>Embryophyta</taxon>
        <taxon>Tracheophyta</taxon>
        <taxon>Spermatophyta</taxon>
        <taxon>Magnoliopsida</taxon>
        <taxon>eudicotyledons</taxon>
        <taxon>Gunneridae</taxon>
        <taxon>Pentapetalae</taxon>
        <taxon>rosids</taxon>
        <taxon>malvids</taxon>
        <taxon>Brassicales</taxon>
        <taxon>Brassicaceae</taxon>
        <taxon>Camelineae</taxon>
        <taxon>Arabidopsis</taxon>
    </lineage>
</organism>
<reference key="1">
    <citation type="submission" date="1998-09" db="EMBL/GenBank/DDBJ databases">
        <title>Arabidopsis thaliana ubiquitin-conjugating like enzyme.</title>
        <authorList>
            <person name="Winge P."/>
            <person name="Kristensen R."/>
            <person name="Bones A.M."/>
        </authorList>
    </citation>
    <scope>NUCLEOTIDE SEQUENCE [GENOMIC DNA / MRNA]</scope>
    <source>
        <strain>cv. Columbia</strain>
    </source>
</reference>
<reference key="2">
    <citation type="journal article" date="2000" name="Nature">
        <title>Sequence and analysis of chromosome 3 of the plant Arabidopsis thaliana.</title>
        <authorList>
            <person name="Salanoubat M."/>
            <person name="Lemcke K."/>
            <person name="Rieger M."/>
            <person name="Ansorge W."/>
            <person name="Unseld M."/>
            <person name="Fartmann B."/>
            <person name="Valle G."/>
            <person name="Bloecker H."/>
            <person name="Perez-Alonso M."/>
            <person name="Obermaier B."/>
            <person name="Delseny M."/>
            <person name="Boutry M."/>
            <person name="Grivell L.A."/>
            <person name="Mache R."/>
            <person name="Puigdomenech P."/>
            <person name="De Simone V."/>
            <person name="Choisne N."/>
            <person name="Artiguenave F."/>
            <person name="Robert C."/>
            <person name="Brottier P."/>
            <person name="Wincker P."/>
            <person name="Cattolico L."/>
            <person name="Weissenbach J."/>
            <person name="Saurin W."/>
            <person name="Quetier F."/>
            <person name="Schaefer M."/>
            <person name="Mueller-Auer S."/>
            <person name="Gabel C."/>
            <person name="Fuchs M."/>
            <person name="Benes V."/>
            <person name="Wurmbach E."/>
            <person name="Drzonek H."/>
            <person name="Erfle H."/>
            <person name="Jordan N."/>
            <person name="Bangert S."/>
            <person name="Wiedelmann R."/>
            <person name="Kranz H."/>
            <person name="Voss H."/>
            <person name="Holland R."/>
            <person name="Brandt P."/>
            <person name="Nyakatura G."/>
            <person name="Vezzi A."/>
            <person name="D'Angelo M."/>
            <person name="Pallavicini A."/>
            <person name="Toppo S."/>
            <person name="Simionati B."/>
            <person name="Conrad A."/>
            <person name="Hornischer K."/>
            <person name="Kauer G."/>
            <person name="Loehnert T.-H."/>
            <person name="Nordsiek G."/>
            <person name="Reichelt J."/>
            <person name="Scharfe M."/>
            <person name="Schoen O."/>
            <person name="Bargues M."/>
            <person name="Terol J."/>
            <person name="Climent J."/>
            <person name="Navarro P."/>
            <person name="Collado C."/>
            <person name="Perez-Perez A."/>
            <person name="Ottenwaelder B."/>
            <person name="Duchemin D."/>
            <person name="Cooke R."/>
            <person name="Laudie M."/>
            <person name="Berger-Llauro C."/>
            <person name="Purnelle B."/>
            <person name="Masuy D."/>
            <person name="de Haan M."/>
            <person name="Maarse A.C."/>
            <person name="Alcaraz J.-P."/>
            <person name="Cottet A."/>
            <person name="Casacuberta E."/>
            <person name="Monfort A."/>
            <person name="Argiriou A."/>
            <person name="Flores M."/>
            <person name="Liguori R."/>
            <person name="Vitale D."/>
            <person name="Mannhaupt G."/>
            <person name="Haase D."/>
            <person name="Schoof H."/>
            <person name="Rudd S."/>
            <person name="Zaccaria P."/>
            <person name="Mewes H.-W."/>
            <person name="Mayer K.F.X."/>
            <person name="Kaul S."/>
            <person name="Town C.D."/>
            <person name="Koo H.L."/>
            <person name="Tallon L.J."/>
            <person name="Jenkins J."/>
            <person name="Rooney T."/>
            <person name="Rizzo M."/>
            <person name="Walts A."/>
            <person name="Utterback T."/>
            <person name="Fujii C.Y."/>
            <person name="Shea T.P."/>
            <person name="Creasy T.H."/>
            <person name="Haas B."/>
            <person name="Maiti R."/>
            <person name="Wu D."/>
            <person name="Peterson J."/>
            <person name="Van Aken S."/>
            <person name="Pai G."/>
            <person name="Militscher J."/>
            <person name="Sellers P."/>
            <person name="Gill J.E."/>
            <person name="Feldblyum T.V."/>
            <person name="Preuss D."/>
            <person name="Lin X."/>
            <person name="Nierman W.C."/>
            <person name="Salzberg S.L."/>
            <person name="White O."/>
            <person name="Venter J.C."/>
            <person name="Fraser C.M."/>
            <person name="Kaneko T."/>
            <person name="Nakamura Y."/>
            <person name="Sato S."/>
            <person name="Kato T."/>
            <person name="Asamizu E."/>
            <person name="Sasamoto S."/>
            <person name="Kimura T."/>
            <person name="Idesawa K."/>
            <person name="Kawashima K."/>
            <person name="Kishida Y."/>
            <person name="Kiyokawa C."/>
            <person name="Kohara M."/>
            <person name="Matsumoto M."/>
            <person name="Matsuno A."/>
            <person name="Muraki A."/>
            <person name="Nakayama S."/>
            <person name="Nakazaki N."/>
            <person name="Shinpo S."/>
            <person name="Takeuchi C."/>
            <person name="Wada T."/>
            <person name="Watanabe A."/>
            <person name="Yamada M."/>
            <person name="Yasuda M."/>
            <person name="Tabata S."/>
        </authorList>
    </citation>
    <scope>NUCLEOTIDE SEQUENCE [LARGE SCALE GENOMIC DNA]</scope>
    <source>
        <strain>cv. Columbia</strain>
    </source>
</reference>
<reference key="3">
    <citation type="journal article" date="2017" name="Plant J.">
        <title>Araport11: a complete reannotation of the Arabidopsis thaliana reference genome.</title>
        <authorList>
            <person name="Cheng C.Y."/>
            <person name="Krishnakumar V."/>
            <person name="Chan A.P."/>
            <person name="Thibaud-Nissen F."/>
            <person name="Schobel S."/>
            <person name="Town C.D."/>
        </authorList>
    </citation>
    <scope>GENOME REANNOTATION</scope>
    <source>
        <strain>cv. Columbia</strain>
    </source>
</reference>
<reference key="4">
    <citation type="journal article" date="2003" name="Science">
        <title>Empirical analysis of transcriptional activity in the Arabidopsis genome.</title>
        <authorList>
            <person name="Yamada K."/>
            <person name="Lim J."/>
            <person name="Dale J.M."/>
            <person name="Chen H."/>
            <person name="Shinn P."/>
            <person name="Palm C.J."/>
            <person name="Southwick A.M."/>
            <person name="Wu H.C."/>
            <person name="Kim C.J."/>
            <person name="Nguyen M."/>
            <person name="Pham P.K."/>
            <person name="Cheuk R.F."/>
            <person name="Karlin-Newmann G."/>
            <person name="Liu S.X."/>
            <person name="Lam B."/>
            <person name="Sakano H."/>
            <person name="Wu T."/>
            <person name="Yu G."/>
            <person name="Miranda M."/>
            <person name="Quach H.L."/>
            <person name="Tripp M."/>
            <person name="Chang C.H."/>
            <person name="Lee J.M."/>
            <person name="Toriumi M.J."/>
            <person name="Chan M.M."/>
            <person name="Tang C.C."/>
            <person name="Onodera C.S."/>
            <person name="Deng J.M."/>
            <person name="Akiyama K."/>
            <person name="Ansari Y."/>
            <person name="Arakawa T."/>
            <person name="Banh J."/>
            <person name="Banno F."/>
            <person name="Bowser L."/>
            <person name="Brooks S.Y."/>
            <person name="Carninci P."/>
            <person name="Chao Q."/>
            <person name="Choy N."/>
            <person name="Enju A."/>
            <person name="Goldsmith A.D."/>
            <person name="Gurjal M."/>
            <person name="Hansen N.F."/>
            <person name="Hayashizaki Y."/>
            <person name="Johnson-Hopson C."/>
            <person name="Hsuan V.W."/>
            <person name="Iida K."/>
            <person name="Karnes M."/>
            <person name="Khan S."/>
            <person name="Koesema E."/>
            <person name="Ishida J."/>
            <person name="Jiang P.X."/>
            <person name="Jones T."/>
            <person name="Kawai J."/>
            <person name="Kamiya A."/>
            <person name="Meyers C."/>
            <person name="Nakajima M."/>
            <person name="Narusaka M."/>
            <person name="Seki M."/>
            <person name="Sakurai T."/>
            <person name="Satou M."/>
            <person name="Tamse R."/>
            <person name="Vaysberg M."/>
            <person name="Wallender E.K."/>
            <person name="Wong C."/>
            <person name="Yamamura Y."/>
            <person name="Yuan S."/>
            <person name="Shinozaki K."/>
            <person name="Davis R.W."/>
            <person name="Theologis A."/>
            <person name="Ecker J.R."/>
        </authorList>
    </citation>
    <scope>NUCLEOTIDE SEQUENCE [LARGE SCALE MRNA]</scope>
    <source>
        <strain>cv. Columbia</strain>
    </source>
</reference>
<reference key="5">
    <citation type="submission" date="2006-07" db="EMBL/GenBank/DDBJ databases">
        <title>Large-scale analysis of RIKEN Arabidopsis full-length (RAFL) cDNAs.</title>
        <authorList>
            <person name="Totoki Y."/>
            <person name="Seki M."/>
            <person name="Ishida J."/>
            <person name="Nakajima M."/>
            <person name="Enju A."/>
            <person name="Kamiya A."/>
            <person name="Narusaka M."/>
            <person name="Shin-i T."/>
            <person name="Nakagawa M."/>
            <person name="Sakamoto N."/>
            <person name="Oishi K."/>
            <person name="Kohara Y."/>
            <person name="Kobayashi M."/>
            <person name="Toyoda A."/>
            <person name="Sakaki Y."/>
            <person name="Sakurai T."/>
            <person name="Iida K."/>
            <person name="Akiyama K."/>
            <person name="Satou M."/>
            <person name="Toyoda T."/>
            <person name="Konagaya A."/>
            <person name="Carninci P."/>
            <person name="Kawai J."/>
            <person name="Hayashizaki Y."/>
            <person name="Shinozaki K."/>
        </authorList>
    </citation>
    <scope>NUCLEOTIDE SEQUENCE [LARGE SCALE MRNA] OF 101-160</scope>
    <source>
        <strain>cv. Columbia</strain>
    </source>
</reference>
<reference key="6">
    <citation type="journal article" date="2007" name="Plant Physiol.">
        <title>Genetic analysis of SUMOylation in Arabidopsis: conjugation of SUMO1 and SUMO2 to nuclear proteins is essential.</title>
        <authorList>
            <person name="Saracco S.A."/>
            <person name="Miller M.J."/>
            <person name="Kurepa J."/>
            <person name="Vierstra R.D."/>
        </authorList>
    </citation>
    <scope>FUNCTION</scope>
    <scope>DISRUPTION PHENOTYPE</scope>
</reference>
<reference key="7">
    <citation type="journal article" date="2008" name="J. Biol. Chem.">
        <title>The PHD domain of plant PIAS proteins mediates sumoylation of bromodomain GTE proteins.</title>
        <authorList>
            <person name="Garcia-Dominguez M."/>
            <person name="March-Diaz R."/>
            <person name="Reyes J.C."/>
        </authorList>
    </citation>
    <scope>FUNCTION</scope>
    <scope>INTERACTION WITH SIZ1</scope>
    <scope>MUTAGENESIS OF CYS-94</scope>
</reference>
<reference key="8">
    <citation type="journal article" date="2009" name="Plant J.">
        <title>The Arabidopsis SUMO E3 ligase AtMMS21, a homologue of NSE2/MMS21, regulates cell proliferation in the root.</title>
        <authorList>
            <person name="Huang L."/>
            <person name="Yang S."/>
            <person name="Zhang S."/>
            <person name="Liu M."/>
            <person name="Lai J."/>
            <person name="Qi Y."/>
            <person name="Shi S."/>
            <person name="Wang J."/>
            <person name="Wang Y."/>
            <person name="Xie Q."/>
            <person name="Yang C."/>
        </authorList>
    </citation>
    <scope>FUNCTION</scope>
    <scope>INTERACTION WITH MMS21</scope>
</reference>
<reference key="9">
    <citation type="journal article" date="2010" name="Proc. Natl. Acad. Sci. U.S.A.">
        <title>Proteome-wide screens for small ubiquitin-like modifier (SUMO) substrates identify Arabidopsis proteins implicated in diverse biological processes.</title>
        <authorList>
            <person name="Elrouby N."/>
            <person name="Coupland G."/>
        </authorList>
    </citation>
    <scope>INTERACTION WITH KIN10</scope>
</reference>
<reference key="10">
    <citation type="journal article" date="2016" name="Plant J.">
        <title>SUMOylation represses SnRK1 signaling in Arabidopsis.</title>
        <authorList>
            <person name="Crozet P."/>
            <person name="Margalha L."/>
            <person name="Butowt R."/>
            <person name="Fernandes N."/>
            <person name="Elias C.A."/>
            <person name="Orosa B."/>
            <person name="Tomanov K."/>
            <person name="Teige M."/>
            <person name="Bachmair A."/>
            <person name="Sadanandom A."/>
            <person name="Baena-Gonzalez E."/>
        </authorList>
    </citation>
    <scope>INTERACTION WITH KIN10</scope>
</reference>
<reference key="11">
    <citation type="journal article" date="2017" name="Front. Plant Sci.">
        <title>Arabidopsis TCP transcription factors interact with the SUMO conjugating machinery in nuclear foci.</title>
        <authorList>
            <person name="Mazur M.J."/>
            <person name="Spears B.J."/>
            <person name="Djajasaputra A."/>
            <person name="van der Gragt M."/>
            <person name="Vlachakis G."/>
            <person name="Beerens B."/>
            <person name="Gassmann W."/>
            <person name="van den Burg H.A."/>
        </authorList>
    </citation>
    <scope>INTERACTION WITH TCP14 AND TCP15</scope>
</reference>
<name>SCE1_ARATH</name>
<sequence length="160" mass="17986">MASGIARGRLAEERKSWRKNHPHGFVAKPETGQDGTVNLMVWHCTIPGKAGTDWEGGFFPLTMHFSEDYPSKPPKCKFPQGFFHPNVYPSGTVCLSILNEDYGWRPAITVKQILVGIQDLLDTPNPADPAQTDGYHLFCQDPVEYKKRVKLQSKQYPALV</sequence>
<accession>Q42551</accession>
<accession>Q0WMG8</accession>
<proteinExistence type="evidence at protein level"/>
<keyword id="KW-0002">3D-structure</keyword>
<keyword id="KW-0007">Acetylation</keyword>
<keyword id="KW-0067">ATP-binding</keyword>
<keyword id="KW-0547">Nucleotide-binding</keyword>
<keyword id="KW-1185">Reference proteome</keyword>
<keyword id="KW-0808">Transferase</keyword>
<keyword id="KW-0833">Ubl conjugation pathway</keyword>
<feature type="initiator methionine" description="Removed" evidence="1">
    <location>
        <position position="1"/>
    </location>
</feature>
<feature type="chain" id="PRO_0000396013" description="SUMO-conjugating enzyme SCE1">
    <location>
        <begin position="2"/>
        <end position="160"/>
    </location>
</feature>
<feature type="domain" description="UBC core" evidence="2">
    <location>
        <begin position="5"/>
        <end position="158"/>
    </location>
</feature>
<feature type="active site" description="Glycyl thioester intermediate">
    <location>
        <position position="94"/>
    </location>
</feature>
<feature type="modified residue" description="N-acetylalanine" evidence="1">
    <location>
        <position position="2"/>
    </location>
</feature>
<feature type="mutagenesis site" description="Loss of activity." evidence="4">
    <original>C</original>
    <variation>S</variation>
    <location>
        <position position="94"/>
    </location>
</feature>
<feature type="sequence conflict" description="In Ref. 5; BAF01688." evidence="9" ref="5">
    <original>P</original>
    <variation>A</variation>
    <location>
        <position position="157"/>
    </location>
</feature>
<feature type="helix" evidence="10">
    <location>
        <begin position="5"/>
        <end position="19"/>
    </location>
</feature>
<feature type="strand" evidence="10">
    <location>
        <begin position="26"/>
        <end position="31"/>
    </location>
</feature>
<feature type="strand" evidence="10">
    <location>
        <begin position="37"/>
        <end position="47"/>
    </location>
</feature>
<feature type="turn" evidence="10">
    <location>
        <begin position="53"/>
        <end position="56"/>
    </location>
</feature>
<feature type="strand" evidence="10">
    <location>
        <begin position="58"/>
        <end position="64"/>
    </location>
</feature>
<feature type="turn" evidence="10">
    <location>
        <begin position="67"/>
        <end position="71"/>
    </location>
</feature>
<feature type="strand" evidence="10">
    <location>
        <begin position="75"/>
        <end position="77"/>
    </location>
</feature>
<feature type="strand" evidence="10">
    <location>
        <begin position="91"/>
        <end position="93"/>
    </location>
</feature>
<feature type="helix" evidence="10">
    <location>
        <begin position="96"/>
        <end position="98"/>
    </location>
</feature>
<feature type="turn" evidence="10">
    <location>
        <begin position="100"/>
        <end position="103"/>
    </location>
</feature>
<feature type="helix" evidence="10">
    <location>
        <begin position="110"/>
        <end position="122"/>
    </location>
</feature>
<feature type="helix" evidence="10">
    <location>
        <begin position="132"/>
        <end position="140"/>
    </location>
</feature>
<feature type="helix" evidence="10">
    <location>
        <begin position="142"/>
        <end position="155"/>
    </location>
</feature>
<gene>
    <name type="primary">SCE1</name>
    <name type="synonym">AHUS5</name>
    <name type="synonym">EMB1637</name>
    <name type="ordered locus">At3g57870</name>
    <name type="ORF">T10K17.80</name>
</gene>
<dbReference type="EC" id="2.3.2.-"/>
<dbReference type="EMBL" id="U44976">
    <property type="protein sequence ID" value="AAA86642.1"/>
    <property type="molecule type" value="mRNA"/>
</dbReference>
<dbReference type="EMBL" id="AF091106">
    <property type="protein sequence ID" value="AAC64116.1"/>
    <property type="molecule type" value="Genomic_DNA"/>
</dbReference>
<dbReference type="EMBL" id="AL132977">
    <property type="protein sequence ID" value="CAB67615.1"/>
    <property type="molecule type" value="Genomic_DNA"/>
</dbReference>
<dbReference type="EMBL" id="CP002686">
    <property type="protein sequence ID" value="AEE79711.1"/>
    <property type="molecule type" value="Genomic_DNA"/>
</dbReference>
<dbReference type="EMBL" id="AY042838">
    <property type="protein sequence ID" value="AAK68778.1"/>
    <property type="molecule type" value="mRNA"/>
</dbReference>
<dbReference type="EMBL" id="BT003377">
    <property type="protein sequence ID" value="AAO30040.1"/>
    <property type="molecule type" value="mRNA"/>
</dbReference>
<dbReference type="EMBL" id="AK229859">
    <property type="protein sequence ID" value="BAF01688.1"/>
    <property type="molecule type" value="mRNA"/>
</dbReference>
<dbReference type="PIR" id="T46009">
    <property type="entry name" value="T46009"/>
</dbReference>
<dbReference type="RefSeq" id="NP_191346.1">
    <property type="nucleotide sequence ID" value="NM_115649.3"/>
</dbReference>
<dbReference type="PDB" id="6GUM">
    <property type="method" value="X-ray"/>
    <property type="resolution" value="1.79 A"/>
    <property type="chains" value="A=1-160"/>
</dbReference>
<dbReference type="PDB" id="6GV3">
    <property type="method" value="X-ray"/>
    <property type="resolution" value="1.20 A"/>
    <property type="chains" value="A=1-160"/>
</dbReference>
<dbReference type="PDBsum" id="6GUM"/>
<dbReference type="PDBsum" id="6GV3"/>
<dbReference type="SMR" id="Q42551"/>
<dbReference type="BioGRID" id="10271">
    <property type="interactions" value="166"/>
</dbReference>
<dbReference type="FunCoup" id="Q42551">
    <property type="interactions" value="4501"/>
</dbReference>
<dbReference type="IntAct" id="Q42551">
    <property type="interactions" value="6"/>
</dbReference>
<dbReference type="STRING" id="3702.Q42551"/>
<dbReference type="PaxDb" id="3702-AT3G57870.1"/>
<dbReference type="ProteomicsDB" id="226589"/>
<dbReference type="EnsemblPlants" id="AT3G57870.1">
    <property type="protein sequence ID" value="AT3G57870.1"/>
    <property type="gene ID" value="AT3G57870"/>
</dbReference>
<dbReference type="GeneID" id="824956"/>
<dbReference type="Gramene" id="AT3G57870.1">
    <property type="protein sequence ID" value="AT3G57870.1"/>
    <property type="gene ID" value="AT3G57870"/>
</dbReference>
<dbReference type="KEGG" id="ath:AT3G57870"/>
<dbReference type="Araport" id="AT3G57870"/>
<dbReference type="TAIR" id="AT3G57870">
    <property type="gene designation" value="SCE1"/>
</dbReference>
<dbReference type="eggNOG" id="KOG0424">
    <property type="taxonomic scope" value="Eukaryota"/>
</dbReference>
<dbReference type="HOGENOM" id="CLU_030988_12_1_1"/>
<dbReference type="InParanoid" id="Q42551"/>
<dbReference type="OMA" id="TWECGIP"/>
<dbReference type="OrthoDB" id="6600758at2759"/>
<dbReference type="PhylomeDB" id="Q42551"/>
<dbReference type="UniPathway" id="UPA00886"/>
<dbReference type="PRO" id="PR:Q42551"/>
<dbReference type="Proteomes" id="UP000006548">
    <property type="component" value="Chromosome 3"/>
</dbReference>
<dbReference type="ExpressionAtlas" id="Q42551">
    <property type="expression patterns" value="baseline and differential"/>
</dbReference>
<dbReference type="GO" id="GO:0005829">
    <property type="term" value="C:cytosol"/>
    <property type="evidence" value="ECO:0007005"/>
    <property type="project" value="TAIR"/>
</dbReference>
<dbReference type="GO" id="GO:0005634">
    <property type="term" value="C:nucleus"/>
    <property type="evidence" value="ECO:0000314"/>
    <property type="project" value="TAIR"/>
</dbReference>
<dbReference type="GO" id="GO:0005524">
    <property type="term" value="F:ATP binding"/>
    <property type="evidence" value="ECO:0007669"/>
    <property type="project" value="UniProtKB-KW"/>
</dbReference>
<dbReference type="GO" id="GO:0019900">
    <property type="term" value="F:kinase binding"/>
    <property type="evidence" value="ECO:0000353"/>
    <property type="project" value="UniProtKB"/>
</dbReference>
<dbReference type="GO" id="GO:0032183">
    <property type="term" value="F:SUMO binding"/>
    <property type="evidence" value="ECO:0000353"/>
    <property type="project" value="TAIR"/>
</dbReference>
<dbReference type="GO" id="GO:0019789">
    <property type="term" value="F:SUMO transferase activity"/>
    <property type="evidence" value="ECO:0000314"/>
    <property type="project" value="TAIR"/>
</dbReference>
<dbReference type="GO" id="GO:0009793">
    <property type="term" value="P:embryo development ending in seed dormancy"/>
    <property type="evidence" value="ECO:0000315"/>
    <property type="project" value="TAIR"/>
</dbReference>
<dbReference type="GO" id="GO:0016925">
    <property type="term" value="P:protein sumoylation"/>
    <property type="evidence" value="ECO:0000314"/>
    <property type="project" value="TAIR"/>
</dbReference>
<dbReference type="GO" id="GO:0009737">
    <property type="term" value="P:response to abscisic acid"/>
    <property type="evidence" value="ECO:0000315"/>
    <property type="project" value="TAIR"/>
</dbReference>
<dbReference type="CDD" id="cd23798">
    <property type="entry name" value="UBCc_UBE2I"/>
    <property type="match status" value="1"/>
</dbReference>
<dbReference type="FunFam" id="3.10.110.10:FF:000038">
    <property type="entry name" value="SUMO-conjugating enzyme SCE1"/>
    <property type="match status" value="1"/>
</dbReference>
<dbReference type="Gene3D" id="3.10.110.10">
    <property type="entry name" value="Ubiquitin Conjugating Enzyme"/>
    <property type="match status" value="1"/>
</dbReference>
<dbReference type="InterPro" id="IPR050113">
    <property type="entry name" value="Ub_conjugating_enzyme"/>
</dbReference>
<dbReference type="InterPro" id="IPR000608">
    <property type="entry name" value="UBQ-conjugat_E2_core"/>
</dbReference>
<dbReference type="InterPro" id="IPR023313">
    <property type="entry name" value="UBQ-conjugating_AS"/>
</dbReference>
<dbReference type="InterPro" id="IPR016135">
    <property type="entry name" value="UBQ-conjugating_enzyme/RWD"/>
</dbReference>
<dbReference type="PANTHER" id="PTHR24067">
    <property type="entry name" value="UBIQUITIN-CONJUGATING ENZYME E2"/>
    <property type="match status" value="1"/>
</dbReference>
<dbReference type="Pfam" id="PF00179">
    <property type="entry name" value="UQ_con"/>
    <property type="match status" value="1"/>
</dbReference>
<dbReference type="SMART" id="SM00212">
    <property type="entry name" value="UBCc"/>
    <property type="match status" value="1"/>
</dbReference>
<dbReference type="SUPFAM" id="SSF54495">
    <property type="entry name" value="UBC-like"/>
    <property type="match status" value="1"/>
</dbReference>
<dbReference type="PROSITE" id="PS00183">
    <property type="entry name" value="UBC_1"/>
    <property type="match status" value="1"/>
</dbReference>
<dbReference type="PROSITE" id="PS50127">
    <property type="entry name" value="UBC_2"/>
    <property type="match status" value="1"/>
</dbReference>
<evidence type="ECO:0000250" key="1">
    <source>
        <dbReference type="UniProtKB" id="P42747"/>
    </source>
</evidence>
<evidence type="ECO:0000255" key="2">
    <source>
        <dbReference type="PROSITE-ProRule" id="PRU00388"/>
    </source>
</evidence>
<evidence type="ECO:0000269" key="3">
    <source>
    </source>
</evidence>
<evidence type="ECO:0000269" key="4">
    <source>
    </source>
</evidence>
<evidence type="ECO:0000269" key="5">
    <source>
    </source>
</evidence>
<evidence type="ECO:0000269" key="6">
    <source>
    </source>
</evidence>
<evidence type="ECO:0000269" key="7">
    <source>
    </source>
</evidence>
<evidence type="ECO:0000269" key="8">
    <source>
    </source>
</evidence>
<evidence type="ECO:0000305" key="9"/>
<evidence type="ECO:0007829" key="10">
    <source>
        <dbReference type="PDB" id="6GV3"/>
    </source>
</evidence>